<feature type="chain" id="PRO_0000137142" description="Nucleoside diphosphate kinase 1">
    <location>
        <begin position="1"/>
        <end position="149"/>
    </location>
</feature>
<feature type="active site" description="Pros-phosphohistidine intermediate" evidence="1">
    <location>
        <position position="116"/>
    </location>
</feature>
<feature type="binding site" evidence="1">
    <location>
        <position position="10"/>
    </location>
    <ligand>
        <name>ATP</name>
        <dbReference type="ChEBI" id="CHEBI:30616"/>
    </ligand>
</feature>
<feature type="binding site" evidence="1">
    <location>
        <position position="58"/>
    </location>
    <ligand>
        <name>ATP</name>
        <dbReference type="ChEBI" id="CHEBI:30616"/>
    </ligand>
</feature>
<feature type="binding site" evidence="1">
    <location>
        <position position="86"/>
    </location>
    <ligand>
        <name>ATP</name>
        <dbReference type="ChEBI" id="CHEBI:30616"/>
    </ligand>
</feature>
<feature type="binding site" evidence="1">
    <location>
        <position position="92"/>
    </location>
    <ligand>
        <name>ATP</name>
        <dbReference type="ChEBI" id="CHEBI:30616"/>
    </ligand>
</feature>
<feature type="binding site" evidence="1">
    <location>
        <position position="103"/>
    </location>
    <ligand>
        <name>ATP</name>
        <dbReference type="ChEBI" id="CHEBI:30616"/>
    </ligand>
</feature>
<feature type="binding site" evidence="1">
    <location>
        <position position="113"/>
    </location>
    <ligand>
        <name>ATP</name>
        <dbReference type="ChEBI" id="CHEBI:30616"/>
    </ligand>
</feature>
<feature type="sequence conflict" description="In Ref. 2; BAA12982." evidence="2" ref="2">
    <original>E</original>
    <variation>Q</variation>
    <location>
        <position position="140"/>
    </location>
</feature>
<proteinExistence type="evidence at transcript level"/>
<organism>
    <name type="scientific">Pisum sativum</name>
    <name type="common">Garden pea</name>
    <name type="synonym">Lathyrus oleraceus</name>
    <dbReference type="NCBI Taxonomy" id="3888"/>
    <lineage>
        <taxon>Eukaryota</taxon>
        <taxon>Viridiplantae</taxon>
        <taxon>Streptophyta</taxon>
        <taxon>Embryophyta</taxon>
        <taxon>Tracheophyta</taxon>
        <taxon>Spermatophyta</taxon>
        <taxon>Magnoliopsida</taxon>
        <taxon>eudicotyledons</taxon>
        <taxon>Gunneridae</taxon>
        <taxon>Pentapetalae</taxon>
        <taxon>rosids</taxon>
        <taxon>fabids</taxon>
        <taxon>Fabales</taxon>
        <taxon>Fabaceae</taxon>
        <taxon>Papilionoideae</taxon>
        <taxon>50 kb inversion clade</taxon>
        <taxon>NPAAA clade</taxon>
        <taxon>Hologalegina</taxon>
        <taxon>IRL clade</taxon>
        <taxon>Fabeae</taxon>
        <taxon>Pisum</taxon>
    </lineage>
</organism>
<evidence type="ECO:0000250" key="1"/>
<evidence type="ECO:0000305" key="2"/>
<protein>
    <recommendedName>
        <fullName>Nucleoside diphosphate kinase 1</fullName>
        <ecNumber>2.7.4.6</ecNumber>
    </recommendedName>
    <alternativeName>
        <fullName>Nucleoside diphosphate kinase I</fullName>
        <shortName>NDK I</shortName>
        <shortName>NDP kinase I</shortName>
        <shortName>NDPK I</shortName>
    </alternativeName>
</protein>
<dbReference type="EC" id="2.7.4.6"/>
<dbReference type="EMBL" id="X71388">
    <property type="protein sequence ID" value="CAA50511.1"/>
    <property type="molecule type" value="mRNA"/>
</dbReference>
<dbReference type="EMBL" id="D86052">
    <property type="protein sequence ID" value="BAA12982.1"/>
    <property type="molecule type" value="mRNA"/>
</dbReference>
<dbReference type="PIR" id="S46513">
    <property type="entry name" value="S33170"/>
</dbReference>
<dbReference type="SMR" id="P47922"/>
<dbReference type="EnsemblPlants" id="Psat4g223480.1">
    <property type="protein sequence ID" value="Psat4g223480.1.cds"/>
    <property type="gene ID" value="Psat4g223480"/>
</dbReference>
<dbReference type="Gramene" id="Psat4g223480.1">
    <property type="protein sequence ID" value="Psat4g223480.1.cds"/>
    <property type="gene ID" value="Psat4g223480"/>
</dbReference>
<dbReference type="OrthoDB" id="2162449at2759"/>
<dbReference type="BRENDA" id="2.7.4.6">
    <property type="organism ID" value="4872"/>
</dbReference>
<dbReference type="GO" id="GO:0005524">
    <property type="term" value="F:ATP binding"/>
    <property type="evidence" value="ECO:0007669"/>
    <property type="project" value="UniProtKB-KW"/>
</dbReference>
<dbReference type="GO" id="GO:0046872">
    <property type="term" value="F:metal ion binding"/>
    <property type="evidence" value="ECO:0007669"/>
    <property type="project" value="UniProtKB-KW"/>
</dbReference>
<dbReference type="GO" id="GO:0004550">
    <property type="term" value="F:nucleoside diphosphate kinase activity"/>
    <property type="evidence" value="ECO:0007669"/>
    <property type="project" value="UniProtKB-EC"/>
</dbReference>
<dbReference type="GO" id="GO:0006241">
    <property type="term" value="P:CTP biosynthetic process"/>
    <property type="evidence" value="ECO:0007669"/>
    <property type="project" value="InterPro"/>
</dbReference>
<dbReference type="GO" id="GO:0006183">
    <property type="term" value="P:GTP biosynthetic process"/>
    <property type="evidence" value="ECO:0007669"/>
    <property type="project" value="InterPro"/>
</dbReference>
<dbReference type="GO" id="GO:0009585">
    <property type="term" value="P:red, far-red light phototransduction"/>
    <property type="evidence" value="ECO:0007669"/>
    <property type="project" value="UniProtKB-KW"/>
</dbReference>
<dbReference type="GO" id="GO:0006228">
    <property type="term" value="P:UTP biosynthetic process"/>
    <property type="evidence" value="ECO:0007669"/>
    <property type="project" value="InterPro"/>
</dbReference>
<dbReference type="CDD" id="cd04413">
    <property type="entry name" value="NDPk_I"/>
    <property type="match status" value="1"/>
</dbReference>
<dbReference type="FunFam" id="3.30.70.141:FF:000002">
    <property type="entry name" value="Nucleoside diphosphate kinase"/>
    <property type="match status" value="1"/>
</dbReference>
<dbReference type="Gene3D" id="3.30.70.141">
    <property type="entry name" value="Nucleoside diphosphate kinase-like domain"/>
    <property type="match status" value="1"/>
</dbReference>
<dbReference type="HAMAP" id="MF_00451">
    <property type="entry name" value="NDP_kinase"/>
    <property type="match status" value="1"/>
</dbReference>
<dbReference type="InterPro" id="IPR034907">
    <property type="entry name" value="NDK-like_dom"/>
</dbReference>
<dbReference type="InterPro" id="IPR036850">
    <property type="entry name" value="NDK-like_dom_sf"/>
</dbReference>
<dbReference type="InterPro" id="IPR001564">
    <property type="entry name" value="Nucleoside_diP_kinase"/>
</dbReference>
<dbReference type="InterPro" id="IPR023005">
    <property type="entry name" value="Nucleoside_diP_kinase_AS"/>
</dbReference>
<dbReference type="NCBIfam" id="NF001908">
    <property type="entry name" value="PRK00668.1"/>
    <property type="match status" value="1"/>
</dbReference>
<dbReference type="PANTHER" id="PTHR11349">
    <property type="entry name" value="NUCLEOSIDE DIPHOSPHATE KINASE"/>
    <property type="match status" value="1"/>
</dbReference>
<dbReference type="Pfam" id="PF00334">
    <property type="entry name" value="NDK"/>
    <property type="match status" value="1"/>
</dbReference>
<dbReference type="PRINTS" id="PR01243">
    <property type="entry name" value="NUCDPKINASE"/>
</dbReference>
<dbReference type="SMART" id="SM00562">
    <property type="entry name" value="NDK"/>
    <property type="match status" value="1"/>
</dbReference>
<dbReference type="SUPFAM" id="SSF54919">
    <property type="entry name" value="Nucleoside diphosphate kinase, NDK"/>
    <property type="match status" value="1"/>
</dbReference>
<dbReference type="PROSITE" id="PS00469">
    <property type="entry name" value="NDPK"/>
    <property type="match status" value="1"/>
</dbReference>
<dbReference type="PROSITE" id="PS51374">
    <property type="entry name" value="NDPK_LIKE"/>
    <property type="match status" value="1"/>
</dbReference>
<comment type="function">
    <text>Major role in the synthesis of nucleoside triphosphates other than ATP. The ATP gamma phosphate is transferred to the NDP beta phosphate via a ping-pong mechanism, using a phosphorylated active-site intermediate. This NDK is microtubule-associated.</text>
</comment>
<comment type="catalytic activity">
    <reaction>
        <text>a 2'-deoxyribonucleoside 5'-diphosphate + ATP = a 2'-deoxyribonucleoside 5'-triphosphate + ADP</text>
        <dbReference type="Rhea" id="RHEA:44640"/>
        <dbReference type="ChEBI" id="CHEBI:30616"/>
        <dbReference type="ChEBI" id="CHEBI:61560"/>
        <dbReference type="ChEBI" id="CHEBI:73316"/>
        <dbReference type="ChEBI" id="CHEBI:456216"/>
        <dbReference type="EC" id="2.7.4.6"/>
    </reaction>
</comment>
<comment type="catalytic activity">
    <reaction>
        <text>a ribonucleoside 5'-diphosphate + ATP = a ribonucleoside 5'-triphosphate + ADP</text>
        <dbReference type="Rhea" id="RHEA:18113"/>
        <dbReference type="ChEBI" id="CHEBI:30616"/>
        <dbReference type="ChEBI" id="CHEBI:57930"/>
        <dbReference type="ChEBI" id="CHEBI:61557"/>
        <dbReference type="ChEBI" id="CHEBI:456216"/>
        <dbReference type="EC" id="2.7.4.6"/>
    </reaction>
</comment>
<comment type="cofactor">
    <cofactor evidence="1">
        <name>Mg(2+)</name>
        <dbReference type="ChEBI" id="CHEBI:18420"/>
    </cofactor>
</comment>
<comment type="similarity">
    <text evidence="2">Belongs to the NDK family.</text>
</comment>
<sequence>MAEQTFIMIKPDGVQRGLVGEIISRFEKKGFYLKGLKFVNVERAFAEKHYADLSAKPFFSGLVDYIISGPVVAMIWEGKNVVTTGRKIIGATNPAQSEPGTIRGDFAIDIGRNVIHGSDAVESANKEIALWFPEGAANWESSLHSWIYE</sequence>
<keyword id="KW-0067">ATP-binding</keyword>
<keyword id="KW-0418">Kinase</keyword>
<keyword id="KW-0460">Magnesium</keyword>
<keyword id="KW-0479">Metal-binding</keyword>
<keyword id="KW-0546">Nucleotide metabolism</keyword>
<keyword id="KW-0547">Nucleotide-binding</keyword>
<keyword id="KW-0597">Phosphoprotein</keyword>
<keyword id="KW-0607">Phytochrome signaling pathway</keyword>
<keyword id="KW-0808">Transferase</keyword>
<gene>
    <name type="primary">NDPK1</name>
    <name type="synonym">NDKN1</name>
</gene>
<reference key="1">
    <citation type="journal article" date="1994" name="Plant Mol. Biol.">
        <title>Molecular cloning, sequence determination and heterologous expression of nucleoside diphosphate kinase from Pisum sativum.</title>
        <authorList>
            <person name="Finan P."/>
            <person name="White I.R."/>
            <person name="Redpath S.H."/>
            <person name="Findlay J.B.C."/>
            <person name="Millner P.A."/>
        </authorList>
    </citation>
    <scope>NUCLEOTIDE SEQUENCE [MRNA]</scope>
    <source>
        <strain>cv. Feltham First</strain>
        <tissue>Seed</tissue>
    </source>
</reference>
<reference key="2">
    <citation type="journal article" date="1998" name="J. Photochem. Photobiol. B">
        <title>Phytochrome-mediated light signals are transduced to nucleoside diphosphate kinase in Pisum sativum L. cv. Alaska.</title>
        <authorList>
            <person name="Tanaka N."/>
            <person name="Ogura T."/>
            <person name="Noguchi T."/>
            <person name="Hirano H."/>
            <person name="Yabe N."/>
            <person name="Hasunuma K."/>
        </authorList>
    </citation>
    <scope>NUCLEOTIDE SEQUENCE [MRNA]</scope>
    <source>
        <strain>cv. Alaska</strain>
    </source>
</reference>
<name>NDK1_PEA</name>
<accession>P47922</accession>
<accession>Q41047</accession>